<proteinExistence type="inferred from homology"/>
<feature type="chain" id="PRO_1000194537" description="tRNA pseudouridine synthase A">
    <location>
        <begin position="1"/>
        <end position="247"/>
    </location>
</feature>
<feature type="active site" description="Nucleophile" evidence="1">
    <location>
        <position position="52"/>
    </location>
</feature>
<feature type="binding site" evidence="1">
    <location>
        <position position="111"/>
    </location>
    <ligand>
        <name>substrate</name>
    </ligand>
</feature>
<gene>
    <name evidence="1" type="primary">truA</name>
    <name type="ordered locus">CCNA_00280</name>
</gene>
<dbReference type="EC" id="5.4.99.12" evidence="1"/>
<dbReference type="EMBL" id="CP001340">
    <property type="protein sequence ID" value="ACL93747.1"/>
    <property type="molecule type" value="Genomic_DNA"/>
</dbReference>
<dbReference type="RefSeq" id="WP_010918167.1">
    <property type="nucleotide sequence ID" value="NC_011916.1"/>
</dbReference>
<dbReference type="RefSeq" id="YP_002515655.1">
    <property type="nucleotide sequence ID" value="NC_011916.1"/>
</dbReference>
<dbReference type="SMR" id="B8GYF0"/>
<dbReference type="GeneID" id="7330733"/>
<dbReference type="KEGG" id="ccs:CCNA_00280"/>
<dbReference type="PATRIC" id="fig|565050.3.peg.277"/>
<dbReference type="HOGENOM" id="CLU_014673_0_2_5"/>
<dbReference type="OrthoDB" id="9811823at2"/>
<dbReference type="PhylomeDB" id="B8GYF0"/>
<dbReference type="Proteomes" id="UP000001364">
    <property type="component" value="Chromosome"/>
</dbReference>
<dbReference type="GO" id="GO:0003723">
    <property type="term" value="F:RNA binding"/>
    <property type="evidence" value="ECO:0007669"/>
    <property type="project" value="InterPro"/>
</dbReference>
<dbReference type="GO" id="GO:0160147">
    <property type="term" value="F:tRNA pseudouridine(38-40) synthase activity"/>
    <property type="evidence" value="ECO:0007669"/>
    <property type="project" value="UniProtKB-EC"/>
</dbReference>
<dbReference type="GO" id="GO:0031119">
    <property type="term" value="P:tRNA pseudouridine synthesis"/>
    <property type="evidence" value="ECO:0007669"/>
    <property type="project" value="UniProtKB-UniRule"/>
</dbReference>
<dbReference type="CDD" id="cd02570">
    <property type="entry name" value="PseudoU_synth_EcTruA"/>
    <property type="match status" value="1"/>
</dbReference>
<dbReference type="FunFam" id="3.30.70.580:FF:000001">
    <property type="entry name" value="tRNA pseudouridine synthase A"/>
    <property type="match status" value="1"/>
</dbReference>
<dbReference type="Gene3D" id="3.30.70.660">
    <property type="entry name" value="Pseudouridine synthase I, catalytic domain, C-terminal subdomain"/>
    <property type="match status" value="1"/>
</dbReference>
<dbReference type="Gene3D" id="3.30.70.580">
    <property type="entry name" value="Pseudouridine synthase I, catalytic domain, N-terminal subdomain"/>
    <property type="match status" value="1"/>
</dbReference>
<dbReference type="HAMAP" id="MF_00171">
    <property type="entry name" value="TruA"/>
    <property type="match status" value="1"/>
</dbReference>
<dbReference type="InterPro" id="IPR020103">
    <property type="entry name" value="PsdUridine_synth_cat_dom_sf"/>
</dbReference>
<dbReference type="InterPro" id="IPR001406">
    <property type="entry name" value="PsdUridine_synth_TruA"/>
</dbReference>
<dbReference type="InterPro" id="IPR020097">
    <property type="entry name" value="PsdUridine_synth_TruA_a/b_dom"/>
</dbReference>
<dbReference type="InterPro" id="IPR020095">
    <property type="entry name" value="PsdUridine_synth_TruA_C"/>
</dbReference>
<dbReference type="InterPro" id="IPR020094">
    <property type="entry name" value="TruA/RsuA/RluB/E/F_N"/>
</dbReference>
<dbReference type="NCBIfam" id="TIGR00071">
    <property type="entry name" value="hisT_truA"/>
    <property type="match status" value="1"/>
</dbReference>
<dbReference type="PANTHER" id="PTHR11142">
    <property type="entry name" value="PSEUDOURIDYLATE SYNTHASE"/>
    <property type="match status" value="1"/>
</dbReference>
<dbReference type="PANTHER" id="PTHR11142:SF0">
    <property type="entry name" value="TRNA PSEUDOURIDINE SYNTHASE-LIKE 1"/>
    <property type="match status" value="1"/>
</dbReference>
<dbReference type="Pfam" id="PF01416">
    <property type="entry name" value="PseudoU_synth_1"/>
    <property type="match status" value="2"/>
</dbReference>
<dbReference type="PIRSF" id="PIRSF001430">
    <property type="entry name" value="tRNA_psdUrid_synth"/>
    <property type="match status" value="1"/>
</dbReference>
<dbReference type="SUPFAM" id="SSF55120">
    <property type="entry name" value="Pseudouridine synthase"/>
    <property type="match status" value="1"/>
</dbReference>
<sequence length="247" mass="27505">MPRYRLLVEYDGRPYAGFQAQATLPSVQGAIEAAVKAFCGQEVRIAAAGRTDTGVHATGQVVHVDLDKDWPAQTVFNALNAHLTREAVSILSAEVAEEGWHARFSANERRYLYRILNRRAPPALDKGRVWHMKKDLDHEAMHAAAQHLIGLHDFTTFRDMHCQSKSPVKTLDVARVRRVGEEIHLDFEARSFLHRQVRSMTGTLVEVGAGRWTVDDVKAALEARDRRECGPVAPADGLYLVGVGYGD</sequence>
<accession>B8GYF0</accession>
<protein>
    <recommendedName>
        <fullName evidence="1">tRNA pseudouridine synthase A</fullName>
        <ecNumber evidence="1">5.4.99.12</ecNumber>
    </recommendedName>
    <alternativeName>
        <fullName evidence="1">tRNA pseudouridine(38-40) synthase</fullName>
    </alternativeName>
    <alternativeName>
        <fullName evidence="1">tRNA pseudouridylate synthase I</fullName>
    </alternativeName>
    <alternativeName>
        <fullName evidence="1">tRNA-uridine isomerase I</fullName>
    </alternativeName>
</protein>
<comment type="function">
    <text evidence="1">Formation of pseudouridine at positions 38, 39 and 40 in the anticodon stem and loop of transfer RNAs.</text>
</comment>
<comment type="catalytic activity">
    <reaction evidence="1">
        <text>uridine(38/39/40) in tRNA = pseudouridine(38/39/40) in tRNA</text>
        <dbReference type="Rhea" id="RHEA:22376"/>
        <dbReference type="Rhea" id="RHEA-COMP:10085"/>
        <dbReference type="Rhea" id="RHEA-COMP:10087"/>
        <dbReference type="ChEBI" id="CHEBI:65314"/>
        <dbReference type="ChEBI" id="CHEBI:65315"/>
        <dbReference type="EC" id="5.4.99.12"/>
    </reaction>
</comment>
<comment type="subunit">
    <text evidence="1">Homodimer.</text>
</comment>
<comment type="similarity">
    <text evidence="1">Belongs to the tRNA pseudouridine synthase TruA family.</text>
</comment>
<name>TRUA_CAUVN</name>
<reference key="1">
    <citation type="journal article" date="2010" name="J. Bacteriol.">
        <title>The genetic basis of laboratory adaptation in Caulobacter crescentus.</title>
        <authorList>
            <person name="Marks M.E."/>
            <person name="Castro-Rojas C.M."/>
            <person name="Teiling C."/>
            <person name="Du L."/>
            <person name="Kapatral V."/>
            <person name="Walunas T.L."/>
            <person name="Crosson S."/>
        </authorList>
    </citation>
    <scope>NUCLEOTIDE SEQUENCE [LARGE SCALE GENOMIC DNA]</scope>
    <source>
        <strain>NA1000 / CB15N</strain>
    </source>
</reference>
<evidence type="ECO:0000255" key="1">
    <source>
        <dbReference type="HAMAP-Rule" id="MF_00171"/>
    </source>
</evidence>
<organism>
    <name type="scientific">Caulobacter vibrioides (strain NA1000 / CB15N)</name>
    <name type="common">Caulobacter crescentus</name>
    <dbReference type="NCBI Taxonomy" id="565050"/>
    <lineage>
        <taxon>Bacteria</taxon>
        <taxon>Pseudomonadati</taxon>
        <taxon>Pseudomonadota</taxon>
        <taxon>Alphaproteobacteria</taxon>
        <taxon>Caulobacterales</taxon>
        <taxon>Caulobacteraceae</taxon>
        <taxon>Caulobacter</taxon>
    </lineage>
</organism>
<keyword id="KW-0413">Isomerase</keyword>
<keyword id="KW-1185">Reference proteome</keyword>
<keyword id="KW-0819">tRNA processing</keyword>